<feature type="chain" id="PRO_0000300324" description="DNA-directed RNA polymerase subunit beta">
    <location>
        <begin position="1"/>
        <end position="1342"/>
    </location>
</feature>
<accession>Q0I5B7</accession>
<gene>
    <name evidence="1" type="primary">rpoB</name>
    <name type="ordered locus">HS_1565</name>
</gene>
<evidence type="ECO:0000255" key="1">
    <source>
        <dbReference type="HAMAP-Rule" id="MF_01321"/>
    </source>
</evidence>
<dbReference type="EC" id="2.7.7.6" evidence="1"/>
<dbReference type="EMBL" id="CP000436">
    <property type="protein sequence ID" value="ABI25833.1"/>
    <property type="molecule type" value="Genomic_DNA"/>
</dbReference>
<dbReference type="SMR" id="Q0I5B7"/>
<dbReference type="KEGG" id="hso:HS_1565"/>
<dbReference type="eggNOG" id="COG0085">
    <property type="taxonomic scope" value="Bacteria"/>
</dbReference>
<dbReference type="HOGENOM" id="CLU_000524_4_0_6"/>
<dbReference type="GO" id="GO:0000428">
    <property type="term" value="C:DNA-directed RNA polymerase complex"/>
    <property type="evidence" value="ECO:0007669"/>
    <property type="project" value="UniProtKB-KW"/>
</dbReference>
<dbReference type="GO" id="GO:0003677">
    <property type="term" value="F:DNA binding"/>
    <property type="evidence" value="ECO:0007669"/>
    <property type="project" value="UniProtKB-UniRule"/>
</dbReference>
<dbReference type="GO" id="GO:0003899">
    <property type="term" value="F:DNA-directed RNA polymerase activity"/>
    <property type="evidence" value="ECO:0007669"/>
    <property type="project" value="UniProtKB-UniRule"/>
</dbReference>
<dbReference type="GO" id="GO:0032549">
    <property type="term" value="F:ribonucleoside binding"/>
    <property type="evidence" value="ECO:0007669"/>
    <property type="project" value="InterPro"/>
</dbReference>
<dbReference type="GO" id="GO:0006351">
    <property type="term" value="P:DNA-templated transcription"/>
    <property type="evidence" value="ECO:0007669"/>
    <property type="project" value="UniProtKB-UniRule"/>
</dbReference>
<dbReference type="CDD" id="cd00653">
    <property type="entry name" value="RNA_pol_B_RPB2"/>
    <property type="match status" value="1"/>
</dbReference>
<dbReference type="FunFam" id="2.40.270.10:FF:000003">
    <property type="entry name" value="DNA-directed RNA polymerase subunit beta"/>
    <property type="match status" value="1"/>
</dbReference>
<dbReference type="FunFam" id="2.40.270.10:FF:000004">
    <property type="entry name" value="DNA-directed RNA polymerase subunit beta"/>
    <property type="match status" value="1"/>
</dbReference>
<dbReference type="FunFam" id="2.40.50.100:FF:000006">
    <property type="entry name" value="DNA-directed RNA polymerase subunit beta"/>
    <property type="match status" value="1"/>
</dbReference>
<dbReference type="FunFam" id="2.40.50.150:FF:000001">
    <property type="entry name" value="DNA-directed RNA polymerase subunit beta"/>
    <property type="match status" value="1"/>
</dbReference>
<dbReference type="FunFam" id="3.90.1100.10:FF:000002">
    <property type="entry name" value="DNA-directed RNA polymerase subunit beta"/>
    <property type="match status" value="1"/>
</dbReference>
<dbReference type="FunFam" id="3.90.1110.10:FF:000001">
    <property type="entry name" value="DNA-directed RNA polymerase subunit beta"/>
    <property type="match status" value="1"/>
</dbReference>
<dbReference type="FunFam" id="3.90.1110.10:FF:000004">
    <property type="entry name" value="DNA-directed RNA polymerase subunit beta"/>
    <property type="match status" value="1"/>
</dbReference>
<dbReference type="FunFam" id="3.90.1800.10:FF:000001">
    <property type="entry name" value="DNA-directed RNA polymerase subunit beta"/>
    <property type="match status" value="1"/>
</dbReference>
<dbReference type="Gene3D" id="2.40.50.100">
    <property type="match status" value="1"/>
</dbReference>
<dbReference type="Gene3D" id="2.40.50.150">
    <property type="match status" value="1"/>
</dbReference>
<dbReference type="Gene3D" id="3.90.1100.10">
    <property type="match status" value="2"/>
</dbReference>
<dbReference type="Gene3D" id="2.30.150.10">
    <property type="entry name" value="DNA-directed RNA polymerase, beta subunit, external 1 domain"/>
    <property type="match status" value="1"/>
</dbReference>
<dbReference type="Gene3D" id="2.40.270.10">
    <property type="entry name" value="DNA-directed RNA polymerase, subunit 2, domain 6"/>
    <property type="match status" value="2"/>
</dbReference>
<dbReference type="Gene3D" id="3.90.1800.10">
    <property type="entry name" value="RNA polymerase alpha subunit dimerisation domain"/>
    <property type="match status" value="1"/>
</dbReference>
<dbReference type="Gene3D" id="3.90.1110.10">
    <property type="entry name" value="RNA polymerase Rpb2, domain 2"/>
    <property type="match status" value="2"/>
</dbReference>
<dbReference type="HAMAP" id="MF_01321">
    <property type="entry name" value="RNApol_bact_RpoB"/>
    <property type="match status" value="1"/>
</dbReference>
<dbReference type="InterPro" id="IPR042107">
    <property type="entry name" value="DNA-dir_RNA_pol_bsu_ext_1_sf"/>
</dbReference>
<dbReference type="InterPro" id="IPR019462">
    <property type="entry name" value="DNA-dir_RNA_pol_bsu_external_1"/>
</dbReference>
<dbReference type="InterPro" id="IPR015712">
    <property type="entry name" value="DNA-dir_RNA_pol_su2"/>
</dbReference>
<dbReference type="InterPro" id="IPR007120">
    <property type="entry name" value="DNA-dir_RNAP_su2_dom"/>
</dbReference>
<dbReference type="InterPro" id="IPR037033">
    <property type="entry name" value="DNA-dir_RNAP_su2_hyb_sf"/>
</dbReference>
<dbReference type="InterPro" id="IPR010243">
    <property type="entry name" value="RNA_pol_bsu_bac"/>
</dbReference>
<dbReference type="InterPro" id="IPR007121">
    <property type="entry name" value="RNA_pol_bsu_CS"/>
</dbReference>
<dbReference type="InterPro" id="IPR007644">
    <property type="entry name" value="RNA_pol_bsu_protrusion"/>
</dbReference>
<dbReference type="InterPro" id="IPR007642">
    <property type="entry name" value="RNA_pol_Rpb2_2"/>
</dbReference>
<dbReference type="InterPro" id="IPR037034">
    <property type="entry name" value="RNA_pol_Rpb2_2_sf"/>
</dbReference>
<dbReference type="InterPro" id="IPR007645">
    <property type="entry name" value="RNA_pol_Rpb2_3"/>
</dbReference>
<dbReference type="InterPro" id="IPR007641">
    <property type="entry name" value="RNA_pol_Rpb2_7"/>
</dbReference>
<dbReference type="InterPro" id="IPR014724">
    <property type="entry name" value="RNA_pol_RPB2_OB-fold"/>
</dbReference>
<dbReference type="NCBIfam" id="NF001616">
    <property type="entry name" value="PRK00405.1"/>
    <property type="match status" value="1"/>
</dbReference>
<dbReference type="NCBIfam" id="TIGR02013">
    <property type="entry name" value="rpoB"/>
    <property type="match status" value="1"/>
</dbReference>
<dbReference type="PANTHER" id="PTHR20856">
    <property type="entry name" value="DNA-DIRECTED RNA POLYMERASE I SUBUNIT 2"/>
    <property type="match status" value="1"/>
</dbReference>
<dbReference type="Pfam" id="PF04563">
    <property type="entry name" value="RNA_pol_Rpb2_1"/>
    <property type="match status" value="1"/>
</dbReference>
<dbReference type="Pfam" id="PF04561">
    <property type="entry name" value="RNA_pol_Rpb2_2"/>
    <property type="match status" value="2"/>
</dbReference>
<dbReference type="Pfam" id="PF04565">
    <property type="entry name" value="RNA_pol_Rpb2_3"/>
    <property type="match status" value="1"/>
</dbReference>
<dbReference type="Pfam" id="PF10385">
    <property type="entry name" value="RNA_pol_Rpb2_45"/>
    <property type="match status" value="1"/>
</dbReference>
<dbReference type="Pfam" id="PF00562">
    <property type="entry name" value="RNA_pol_Rpb2_6"/>
    <property type="match status" value="1"/>
</dbReference>
<dbReference type="Pfam" id="PF04560">
    <property type="entry name" value="RNA_pol_Rpb2_7"/>
    <property type="match status" value="1"/>
</dbReference>
<dbReference type="SUPFAM" id="SSF64484">
    <property type="entry name" value="beta and beta-prime subunits of DNA dependent RNA-polymerase"/>
    <property type="match status" value="1"/>
</dbReference>
<dbReference type="PROSITE" id="PS01166">
    <property type="entry name" value="RNA_POL_BETA"/>
    <property type="match status" value="1"/>
</dbReference>
<keyword id="KW-0240">DNA-directed RNA polymerase</keyword>
<keyword id="KW-0548">Nucleotidyltransferase</keyword>
<keyword id="KW-0804">Transcription</keyword>
<keyword id="KW-0808">Transferase</keyword>
<reference key="1">
    <citation type="journal article" date="2007" name="J. Bacteriol.">
        <title>Complete genome sequence of Haemophilus somnus (Histophilus somni) strain 129Pt and comparison to Haemophilus ducreyi 35000HP and Haemophilus influenzae Rd.</title>
        <authorList>
            <person name="Challacombe J.F."/>
            <person name="Duncan A.J."/>
            <person name="Brettin T.S."/>
            <person name="Bruce D."/>
            <person name="Chertkov O."/>
            <person name="Detter J.C."/>
            <person name="Han C.S."/>
            <person name="Misra M."/>
            <person name="Richardson P."/>
            <person name="Tapia R."/>
            <person name="Thayer N."/>
            <person name="Xie G."/>
            <person name="Inzana T.J."/>
        </authorList>
    </citation>
    <scope>NUCLEOTIDE SEQUENCE [LARGE SCALE GENOMIC DNA]</scope>
    <source>
        <strain>129Pt</strain>
    </source>
</reference>
<proteinExistence type="inferred from homology"/>
<name>RPOB_HISS1</name>
<sequence length="1342" mass="149894">MVYSYTEKKRIRKSFGKRPQVLNVPYLLTIQLDSFDKFIQRDPDGQQGLEAAFRSIFPIVSNNGNTELQYVSYQLGEPVFDVRECQIRGTTYAASLRVKLRLVSYDKDAASGTIKDIKEQEVYMGEIPLMTSNGTFVINGTERVVVSQLHRSPGVFFDSDKGKTHSSGKVLYNARIIPYRGSWLDFEFDPKDNLYARIDRRRKLPATIILRALNYTTEEILDLFFDKVSFEIKDNKLLMTLVPERLRGETASFDIEANGKVYIERGRRITARHIKALEKDKITQVEVPTEYIVGKVSAKDYVDLTTGEIICPANMEISLELLEKLSQAGYKNIETLFTNDLDFGPYISETLRVDPSYDRLSALVEIYRMMRPGEPPTKEAAEGLFDNLFFSSERYDLSAVGRMKFNRSLGIEDTTGSGTLSKEDIVNVMRKLIDIRNGRGEVDDIDHLGNRRIRSVGEMAENQFRIGLVRVERAVKERLSLGDLESVTPQDLINAKPISAAVKEFFGSSQLSQFMDQNNPLSEVTHKRRISALGPGGLTRERAGFEVRDVHATHYGRVCPIETPEGPNIGLINSLSVYARTNDYGFLETPYRKVVNGQVTEEIEYLSAIEEGKYVIAQANSNLDGELRFTDAFVTCRGEHGESGLYRPEEIHYMDVSTQQVVSVAAALIPFLEHDDANRALMGANMQRQAVPTLRADKPLVGTGMEKPVALDSGVAVVAKRGGTIQYVDASRIVVKVNEDETIAGEAGIDIYNLIKYTRSNQNTCINQIPCVQLGEPIERGEILADGPSTDLGELALGQNMRVAFMPWNGYNFEDSMLVSERVVQEDRFTTIHIQELSCVARDTKLGSEEITADIPNVGEAALSKLDESGIVYIGAEVKGGDILVGKVTPKGETQLTPEEKLLRAIFGEKASDVKDSSLRVPNGTSGTVIDVQVFTRDGVEKDKRALEIEEMQLKQAKKDLVEELEILEAGLFARVRNLLLSGGFNDKQLENLDRTQWLEQTLVDEDKQNQLEQLAEQYEELRKDFEHKLEIKRSKIIQGDDLAPGVLKVVKVYLAVKRQIQPGDKMAGRHGNKGVISKINPVEDMPYDENGQPVDIVLNPLGVPSRMNIGQILETHLGLAAKGIGDQINAMIKQKQDVEKLRGYIQKAYDLGDGSQKVDLSTFTDEEVLRLAKNLRKGMPLATPVFDGAHEKEIKALLELGGLPTSGQITLFDGRTGEKFERPVTVGYMYMLKLNHLVDDKMHARSTGSYSLVTQQPLGGKAQFGGQRFGEMEVWALEAYGAAYTLQEMLTVKSDDVNGRTKMYKNIVGGTHQMDPGTPESFNVIMKEIRSLGINIDLDEE</sequence>
<organism>
    <name type="scientific">Histophilus somni (strain 129Pt)</name>
    <name type="common">Haemophilus somnus</name>
    <dbReference type="NCBI Taxonomy" id="205914"/>
    <lineage>
        <taxon>Bacteria</taxon>
        <taxon>Pseudomonadati</taxon>
        <taxon>Pseudomonadota</taxon>
        <taxon>Gammaproteobacteria</taxon>
        <taxon>Pasteurellales</taxon>
        <taxon>Pasteurellaceae</taxon>
        <taxon>Histophilus</taxon>
    </lineage>
</organism>
<protein>
    <recommendedName>
        <fullName evidence="1">DNA-directed RNA polymerase subunit beta</fullName>
        <shortName evidence="1">RNAP subunit beta</shortName>
        <ecNumber evidence="1">2.7.7.6</ecNumber>
    </recommendedName>
    <alternativeName>
        <fullName evidence="1">RNA polymerase subunit beta</fullName>
    </alternativeName>
    <alternativeName>
        <fullName evidence="1">Transcriptase subunit beta</fullName>
    </alternativeName>
</protein>
<comment type="function">
    <text evidence="1">DNA-dependent RNA polymerase catalyzes the transcription of DNA into RNA using the four ribonucleoside triphosphates as substrates.</text>
</comment>
<comment type="catalytic activity">
    <reaction evidence="1">
        <text>RNA(n) + a ribonucleoside 5'-triphosphate = RNA(n+1) + diphosphate</text>
        <dbReference type="Rhea" id="RHEA:21248"/>
        <dbReference type="Rhea" id="RHEA-COMP:14527"/>
        <dbReference type="Rhea" id="RHEA-COMP:17342"/>
        <dbReference type="ChEBI" id="CHEBI:33019"/>
        <dbReference type="ChEBI" id="CHEBI:61557"/>
        <dbReference type="ChEBI" id="CHEBI:140395"/>
        <dbReference type="EC" id="2.7.7.6"/>
    </reaction>
</comment>
<comment type="subunit">
    <text evidence="1">The RNAP catalytic core consists of 2 alpha, 1 beta, 1 beta' and 1 omega subunit. When a sigma factor is associated with the core the holoenzyme is formed, which can initiate transcription.</text>
</comment>
<comment type="similarity">
    <text evidence="1">Belongs to the RNA polymerase beta chain family.</text>
</comment>